<name>RNFA_RHOCA</name>
<evidence type="ECO:0000250" key="1">
    <source>
        <dbReference type="UniProtKB" id="D5ARY9"/>
    </source>
</evidence>
<evidence type="ECO:0000255" key="2">
    <source>
        <dbReference type="HAMAP-Rule" id="MF_00459"/>
    </source>
</evidence>
<evidence type="ECO:0000269" key="3">
    <source>
    </source>
</evidence>
<evidence type="ECO:0000269" key="4">
    <source>
    </source>
</evidence>
<evidence type="ECO:0000303" key="5">
    <source>
    </source>
</evidence>
<evidence type="ECO:0000305" key="6"/>
<evidence type="ECO:0000305" key="7">
    <source>
    </source>
</evidence>
<accession>P0CZ13</accession>
<accession>Q07396</accession>
<reference key="1">
    <citation type="journal article" date="1993" name="Mol. Gen. Genet.">
        <title>Identification of a new class of nitrogen fixation genes in Rhodobacter capsulatus: a putative membrane complex involved in electron transport to nitrogenase.</title>
        <authorList>
            <person name="Schmehl M."/>
            <person name="Jahn A."/>
            <person name="Meyer zu Vilsendorf A."/>
            <person name="Hennecke S."/>
            <person name="Masepohl B."/>
            <person name="Schuppler M."/>
            <person name="Marxer M."/>
            <person name="Oelze J."/>
            <person name="Klipp W."/>
        </authorList>
    </citation>
    <scope>NUCLEOTIDE SEQUENCE [GENOMIC DNA]</scope>
    <scope>FUNCTION</scope>
    <scope>GENE NAME</scope>
    <source>
        <strain>B10S</strain>
    </source>
</reference>
<reference key="2">
    <citation type="journal article" date="1998" name="Eur. J. Biochem.">
        <title>Overexpression in Escherichia coli of the rnf genes from Rhodobacter capsulatus -- characterization of two membrane-bound iron-sulfur proteins.</title>
        <authorList>
            <person name="Jouanneau Y."/>
            <person name="Jeong H.-S."/>
            <person name="Hugo N."/>
            <person name="Meyer C."/>
            <person name="Willison J.C."/>
        </authorList>
    </citation>
    <scope>NUCLEOTIDE SEQUENCE [GENOMIC DNA]</scope>
    <scope>SUBUNIT</scope>
    <scope>INDUCTION</scope>
    <source>
        <strain>ATCC 33303 / B10</strain>
    </source>
</reference>
<protein>
    <recommendedName>
        <fullName evidence="2 6">Ion-translocating oxidoreductase complex subunit A</fullName>
        <ecNumber evidence="2 6">7.-.-.-</ecNumber>
    </recommendedName>
    <alternativeName>
        <fullName evidence="6">Nitrogen fixation protein RnfA</fullName>
    </alternativeName>
    <alternativeName>
        <fullName evidence="2 6">Rnf electron transport complex subunit A</fullName>
    </alternativeName>
</protein>
<gene>
    <name evidence="2 5" type="primary">rnfA</name>
</gene>
<sequence length="193" mass="20424">MQDFLLVLLSTALVNNVVLVKFLGLCPFMGVSRKTDAAIGMGLATTFVITVASAACWLVEALILEPLDLKFLRILSMILVIAAIVQFIETVMRKVTPDLHKALGIYLPLITTNCAVLGLPLMYIQGHLSLAMSTLSGFGASVGFTLVLVIFAGMRERLAQLSVPAAFAGTPIAFVSAGLLGLAFMGFAGLVHV</sequence>
<keyword id="KW-0249">Electron transport</keyword>
<keyword id="KW-0472">Membrane</keyword>
<keyword id="KW-0535">Nitrogen fixation</keyword>
<keyword id="KW-1278">Translocase</keyword>
<keyword id="KW-0812">Transmembrane</keyword>
<keyword id="KW-1133">Transmembrane helix</keyword>
<keyword id="KW-0813">Transport</keyword>
<comment type="function">
    <text evidence="2 3">Part of a membrane-bound complex that couples electron transfer with translocation of ions across the membrane (By similarity). Required for nitrogen fixation. Involved in electron transfer to nitrogenase (PubMed:8264535).</text>
</comment>
<comment type="subunit">
    <text evidence="2 7">The complex is composed of six subunits: RnfA, RnfB, RnfC, RnfD, RnfE and RnfG.</text>
</comment>
<comment type="subcellular location">
    <subcellularLocation>
        <location evidence="1 2">Cellular chromatophore membrane</location>
        <topology evidence="2">Multi-pass membrane protein</topology>
    </subcellularLocation>
</comment>
<comment type="induction">
    <text evidence="4">Expression is reduced under iron-limiting conditions.</text>
</comment>
<comment type="similarity">
    <text evidence="2">Belongs to the NqrDE/RnfAE family.</text>
</comment>
<organism>
    <name type="scientific">Rhodobacter capsulatus</name>
    <name type="common">Rhodopseudomonas capsulata</name>
    <dbReference type="NCBI Taxonomy" id="1061"/>
    <lineage>
        <taxon>Bacteria</taxon>
        <taxon>Pseudomonadati</taxon>
        <taxon>Pseudomonadota</taxon>
        <taxon>Alphaproteobacteria</taxon>
        <taxon>Rhodobacterales</taxon>
        <taxon>Rhodobacter group</taxon>
        <taxon>Rhodobacter</taxon>
    </lineage>
</organism>
<proteinExistence type="evidence at protein level"/>
<dbReference type="EC" id="7.-.-.-" evidence="2 6"/>
<dbReference type="EMBL" id="X72888">
    <property type="protein sequence ID" value="CAA51401.1"/>
    <property type="molecule type" value="Genomic_DNA"/>
</dbReference>
<dbReference type="EMBL" id="Y11913">
    <property type="protein sequence ID" value="CAA72668.1"/>
    <property type="molecule type" value="Genomic_DNA"/>
</dbReference>
<dbReference type="PIR" id="S39895">
    <property type="entry name" value="S39895"/>
</dbReference>
<dbReference type="SMR" id="P0CZ13"/>
<dbReference type="OMA" id="ILGLCPF"/>
<dbReference type="OrthoDB" id="9803631at2"/>
<dbReference type="GO" id="GO:0016020">
    <property type="term" value="C:membrane"/>
    <property type="evidence" value="ECO:0000314"/>
    <property type="project" value="CACAO"/>
</dbReference>
<dbReference type="GO" id="GO:0070111">
    <property type="term" value="C:organellar chromatophore"/>
    <property type="evidence" value="ECO:0000314"/>
    <property type="project" value="CACAO"/>
</dbReference>
<dbReference type="GO" id="GO:0005886">
    <property type="term" value="C:plasma membrane"/>
    <property type="evidence" value="ECO:0007669"/>
    <property type="project" value="UniProtKB-UniRule"/>
</dbReference>
<dbReference type="GO" id="GO:0042717">
    <property type="term" value="C:plasma membrane-derived chromatophore membrane"/>
    <property type="evidence" value="ECO:0007669"/>
    <property type="project" value="UniProtKB-SubCell"/>
</dbReference>
<dbReference type="GO" id="GO:0022900">
    <property type="term" value="P:electron transport chain"/>
    <property type="evidence" value="ECO:0007669"/>
    <property type="project" value="UniProtKB-UniRule"/>
</dbReference>
<dbReference type="GO" id="GO:0009399">
    <property type="term" value="P:nitrogen fixation"/>
    <property type="evidence" value="ECO:0007669"/>
    <property type="project" value="UniProtKB-KW"/>
</dbReference>
<dbReference type="HAMAP" id="MF_00459">
    <property type="entry name" value="RsxA_RnfA"/>
    <property type="match status" value="1"/>
</dbReference>
<dbReference type="InterPro" id="IPR011293">
    <property type="entry name" value="Ion_transpt_RnfA/RsxA"/>
</dbReference>
<dbReference type="InterPro" id="IPR003667">
    <property type="entry name" value="NqrDE/RnfAE"/>
</dbReference>
<dbReference type="InterPro" id="IPR050133">
    <property type="entry name" value="NqrDE/RnfAE_oxidrdctase"/>
</dbReference>
<dbReference type="NCBIfam" id="NF003481">
    <property type="entry name" value="PRK05151.1"/>
    <property type="match status" value="1"/>
</dbReference>
<dbReference type="NCBIfam" id="TIGR01943">
    <property type="entry name" value="rnfA"/>
    <property type="match status" value="1"/>
</dbReference>
<dbReference type="PANTHER" id="PTHR30335">
    <property type="entry name" value="INTEGRAL MEMBRANE PROTEIN OF SOXR-REDUCING COMPLEX"/>
    <property type="match status" value="1"/>
</dbReference>
<dbReference type="PANTHER" id="PTHR30335:SF0">
    <property type="entry name" value="ION-TRANSLOCATING OXIDOREDUCTASE COMPLEX SUBUNIT A"/>
    <property type="match status" value="1"/>
</dbReference>
<dbReference type="Pfam" id="PF02508">
    <property type="entry name" value="Rnf-Nqr"/>
    <property type="match status" value="1"/>
</dbReference>
<dbReference type="PIRSF" id="PIRSF006102">
    <property type="entry name" value="NQR_DE"/>
    <property type="match status" value="1"/>
</dbReference>
<feature type="chain" id="PRO_0000214296" description="Ion-translocating oxidoreductase complex subunit A">
    <location>
        <begin position="1"/>
        <end position="193"/>
    </location>
</feature>
<feature type="transmembrane region" description="Helical" evidence="2">
    <location>
        <begin position="4"/>
        <end position="24"/>
    </location>
</feature>
<feature type="transmembrane region" description="Helical" evidence="2">
    <location>
        <begin position="39"/>
        <end position="59"/>
    </location>
</feature>
<feature type="transmembrane region" description="Helical" evidence="2">
    <location>
        <begin position="71"/>
        <end position="91"/>
    </location>
</feature>
<feature type="transmembrane region" description="Helical" evidence="2">
    <location>
        <begin position="102"/>
        <end position="122"/>
    </location>
</feature>
<feature type="transmembrane region" description="Helical" evidence="2">
    <location>
        <begin position="134"/>
        <end position="154"/>
    </location>
</feature>
<feature type="transmembrane region" description="Helical" evidence="2">
    <location>
        <begin position="171"/>
        <end position="191"/>
    </location>
</feature>